<organism>
    <name type="scientific">Human herpesvirus 2 (strain HG52)</name>
    <name type="common">HHV-2</name>
    <name type="synonym">Human herpes simplex virus 2</name>
    <dbReference type="NCBI Taxonomy" id="10315"/>
    <lineage>
        <taxon>Viruses</taxon>
        <taxon>Duplodnaviria</taxon>
        <taxon>Heunggongvirae</taxon>
        <taxon>Peploviricota</taxon>
        <taxon>Herviviricetes</taxon>
        <taxon>Herpesvirales</taxon>
        <taxon>Orthoherpesviridae</taxon>
        <taxon>Alphaherpesvirinae</taxon>
        <taxon>Simplexvirus</taxon>
        <taxon>Simplexvirus humanalpha2</taxon>
        <taxon>Human herpesvirus 2</taxon>
    </lineage>
</organism>
<protein>
    <recommendedName>
        <fullName>Replication origin-binding protein</fullName>
        <shortName>OBP</shortName>
    </recommendedName>
    <alternativeName>
        <fullName>OriBP</fullName>
    </alternativeName>
</protein>
<dbReference type="EMBL" id="Z86099">
    <property type="protein sequence ID" value="CAB06769.2"/>
    <property type="molecule type" value="Genomic_DNA"/>
</dbReference>
<dbReference type="IntAct" id="P89432">
    <property type="interactions" value="1"/>
</dbReference>
<dbReference type="MINT" id="P89432"/>
<dbReference type="Proteomes" id="UP000001874">
    <property type="component" value="Segment"/>
</dbReference>
<dbReference type="GO" id="GO:0042025">
    <property type="term" value="C:host cell nucleus"/>
    <property type="evidence" value="ECO:0007669"/>
    <property type="project" value="UniProtKB-SubCell"/>
</dbReference>
<dbReference type="GO" id="GO:0005524">
    <property type="term" value="F:ATP binding"/>
    <property type="evidence" value="ECO:0007669"/>
    <property type="project" value="UniProtKB-KW"/>
</dbReference>
<dbReference type="GO" id="GO:0003688">
    <property type="term" value="F:DNA replication origin binding"/>
    <property type="evidence" value="ECO:0007669"/>
    <property type="project" value="InterPro"/>
</dbReference>
<dbReference type="GO" id="GO:0006260">
    <property type="term" value="P:DNA replication"/>
    <property type="evidence" value="ECO:0007669"/>
    <property type="project" value="UniProtKB-KW"/>
</dbReference>
<dbReference type="FunFam" id="3.40.50.300:FF:001772">
    <property type="entry name" value="DNA replication origin-binding helicase"/>
    <property type="match status" value="1"/>
</dbReference>
<dbReference type="Gene3D" id="3.40.50.300">
    <property type="entry name" value="P-loop containing nucleotide triphosphate hydrolases"/>
    <property type="match status" value="1"/>
</dbReference>
<dbReference type="InterPro" id="IPR014001">
    <property type="entry name" value="Helicase_ATP-bd"/>
</dbReference>
<dbReference type="InterPro" id="IPR027417">
    <property type="entry name" value="P-loop_NTPase"/>
</dbReference>
<dbReference type="InterPro" id="IPR003450">
    <property type="entry name" value="Replication_origin-bd"/>
</dbReference>
<dbReference type="Pfam" id="PF02399">
    <property type="entry name" value="Herpes_ori_bp"/>
    <property type="match status" value="1"/>
</dbReference>
<dbReference type="SMART" id="SM00487">
    <property type="entry name" value="DEXDc"/>
    <property type="match status" value="1"/>
</dbReference>
<dbReference type="SUPFAM" id="SSF52540">
    <property type="entry name" value="P-loop containing nucleoside triphosphate hydrolases"/>
    <property type="match status" value="1"/>
</dbReference>
<dbReference type="PROSITE" id="PS51192">
    <property type="entry name" value="HELICASE_ATP_BIND_1"/>
    <property type="match status" value="1"/>
</dbReference>
<evidence type="ECO:0000250" key="1"/>
<evidence type="ECO:0000255" key="2">
    <source>
        <dbReference type="PROSITE-ProRule" id="PRU00541"/>
    </source>
</evidence>
<evidence type="ECO:0000256" key="3">
    <source>
        <dbReference type="SAM" id="MobiDB-lite"/>
    </source>
</evidence>
<evidence type="ECO:0000305" key="4"/>
<sequence length="867" mass="95799">MNVATCTHQTHHAARAPGATSAPGAASGDPLGARRPIGDDECEQYTSSVSLARMLYGGDLAEWVPRVHPKTTIERQQHGPVTFPDASAPTARCVTVVRAPMGSGKTTALIRWLGEAIHSPDTSVLVVSCRRSFTQTLATRFAESGLPDFVTYFSSTNYIMNDRPFHRLIVQVESLHRVGPNLLNNYDVLVLDEVMSTLGQLYSPTMQQLGRVDALMLRLLRTCPRIIAMDATANAQLVDFLCSLRGEKNVHVVIGEYAMPGFSARRCLFLPRLGPEVLQAALRRRGPAGGAPPPDAPPDATFFGELEARLAGGDNVCIFSSTVSFAEVVARFCRQFTDRVLLLHSLTPPGDVTTWGRYRVVIYTTVVTVGLSFDPPHFDSMFAYVKPMNYGPDMVSVYQSLGRVRTLRKGELLIYMDGSGARSEPVFTPMLLNHVVSASGQWPAQFSQVTNLLCRRFKGRCDASHADAAQARGSRIYSKFRYKHYFERCTLACLADSLNILHMLLTLNCMHVRFWGHDAALTPRNFCLFLRGIHFDALRAQRDLRELRCQDPDTSLSAQAAETEEVGLFVEKYLRPDVAPAEVVALMRGLNSLVGRTRFIYLVLLEACLRVPMAAHSSAIFRRLYDHYATGVIPTINAAGELELVALHPTLNVAPVWELFRLCSTMAACLQWDSMAGGSGRTFSPEDVLELLNPHYDRYMQLVFELGHCNVTDGPLLSEDAVKRVADALSGCPPRGSVSETEHALSLFKIIWGELFGVQLAKSTQTFPGAGRVKNLTKRAIVELLDAHRIDHSACRTHRQLYALLMAHKREFAGARFKLRAPAWGRCLRTHASGAQPNTDIILEAALSELPTEAWPMMQGAVNFSTL</sequence>
<name>OBP_HHV2H</name>
<accession>P89432</accession>
<reference key="1">
    <citation type="journal article" date="1998" name="J. Virol.">
        <title>The genome sequence of herpes simplex virus type 2.</title>
        <authorList>
            <person name="Dolan A."/>
            <person name="Jamieson F.E."/>
            <person name="Cunningham C."/>
            <person name="Barnett B.C."/>
            <person name="McGeoch D.J."/>
        </authorList>
    </citation>
    <scope>NUCLEOTIDE SEQUENCE [LARGE SCALE GENOMIC DNA]</scope>
</reference>
<feature type="chain" id="PRO_0000385140" description="Replication origin-binding protein">
    <location>
        <begin position="1"/>
        <end position="867"/>
    </location>
</feature>
<feature type="domain" description="Helicase ATP-binding" evidence="2">
    <location>
        <begin position="86"/>
        <end position="251"/>
    </location>
</feature>
<feature type="region of interest" description="Disordered" evidence="3">
    <location>
        <begin position="1"/>
        <end position="39"/>
    </location>
</feature>
<feature type="compositionally biased region" description="Low complexity" evidence="3">
    <location>
        <begin position="15"/>
        <end position="28"/>
    </location>
</feature>
<feature type="binding site" evidence="2">
    <location>
        <begin position="99"/>
        <end position="106"/>
    </location>
    <ligand>
        <name>ATP</name>
        <dbReference type="ChEBI" id="CHEBI:30616"/>
    </ligand>
</feature>
<keyword id="KW-0067">ATP-binding</keyword>
<keyword id="KW-0235">DNA replication</keyword>
<keyword id="KW-0238">DNA-binding</keyword>
<keyword id="KW-1048">Host nucleus</keyword>
<keyword id="KW-0547">Nucleotide-binding</keyword>
<keyword id="KW-1185">Reference proteome</keyword>
<proteinExistence type="inferred from homology"/>
<gene>
    <name type="ORF">UL9</name>
</gene>
<comment type="function">
    <text>Functions as a docking protein to recruit essential components of the viral replication machinery to viral DNA origins. In the presence of the major DNA-binding protein, opens dsDNA leading to a conformational change in the origin that facilitates DNA unwinding and subsequent replication.</text>
</comment>
<comment type="subunit">
    <text evidence="1">Homodimer. Interacts with the major DNA-binding protein ICP8. Interacts with the helicase/primase component UL8 and the polymerase accessory protein UL42 (By similarity).</text>
</comment>
<comment type="subcellular location">
    <subcellularLocation>
        <location evidence="4">Host nucleus</location>
    </subcellularLocation>
</comment>
<comment type="similarity">
    <text evidence="4">Belongs to the herpesviridae OriBP family.</text>
</comment>
<organismHost>
    <name type="scientific">Homo sapiens</name>
    <name type="common">Human</name>
    <dbReference type="NCBI Taxonomy" id="9606"/>
</organismHost>